<organism>
    <name type="scientific">Xanthomonas campestris pv. campestris (strain 8004)</name>
    <dbReference type="NCBI Taxonomy" id="314565"/>
    <lineage>
        <taxon>Bacteria</taxon>
        <taxon>Pseudomonadati</taxon>
        <taxon>Pseudomonadota</taxon>
        <taxon>Gammaproteobacteria</taxon>
        <taxon>Lysobacterales</taxon>
        <taxon>Lysobacteraceae</taxon>
        <taxon>Xanthomonas</taxon>
    </lineage>
</organism>
<dbReference type="EC" id="1.1.1.267" evidence="1"/>
<dbReference type="EMBL" id="CP000050">
    <property type="protein sequence ID" value="AAY49919.1"/>
    <property type="molecule type" value="Genomic_DNA"/>
</dbReference>
<dbReference type="RefSeq" id="WP_011036559.1">
    <property type="nucleotide sequence ID" value="NZ_CP155948.1"/>
</dbReference>
<dbReference type="SMR" id="Q4USQ4"/>
<dbReference type="KEGG" id="xcb:XC_2871"/>
<dbReference type="HOGENOM" id="CLU_035714_0_1_6"/>
<dbReference type="UniPathway" id="UPA00056">
    <property type="reaction ID" value="UER00092"/>
</dbReference>
<dbReference type="Proteomes" id="UP000000420">
    <property type="component" value="Chromosome"/>
</dbReference>
<dbReference type="GO" id="GO:0030604">
    <property type="term" value="F:1-deoxy-D-xylulose-5-phosphate reductoisomerase activity"/>
    <property type="evidence" value="ECO:0007669"/>
    <property type="project" value="UniProtKB-UniRule"/>
</dbReference>
<dbReference type="GO" id="GO:0030145">
    <property type="term" value="F:manganese ion binding"/>
    <property type="evidence" value="ECO:0007669"/>
    <property type="project" value="TreeGrafter"/>
</dbReference>
<dbReference type="GO" id="GO:0070402">
    <property type="term" value="F:NADPH binding"/>
    <property type="evidence" value="ECO:0007669"/>
    <property type="project" value="InterPro"/>
</dbReference>
<dbReference type="GO" id="GO:0051484">
    <property type="term" value="P:isopentenyl diphosphate biosynthetic process, methylerythritol 4-phosphate pathway involved in terpenoid biosynthetic process"/>
    <property type="evidence" value="ECO:0007669"/>
    <property type="project" value="TreeGrafter"/>
</dbReference>
<dbReference type="FunFam" id="3.40.50.720:FF:000045">
    <property type="entry name" value="1-deoxy-D-xylulose 5-phosphate reductoisomerase"/>
    <property type="match status" value="1"/>
</dbReference>
<dbReference type="Gene3D" id="1.10.1740.10">
    <property type="match status" value="1"/>
</dbReference>
<dbReference type="Gene3D" id="3.40.50.720">
    <property type="entry name" value="NAD(P)-binding Rossmann-like Domain"/>
    <property type="match status" value="1"/>
</dbReference>
<dbReference type="HAMAP" id="MF_00183">
    <property type="entry name" value="DXP_reductoisom"/>
    <property type="match status" value="1"/>
</dbReference>
<dbReference type="InterPro" id="IPR003821">
    <property type="entry name" value="DXP_reductoisomerase"/>
</dbReference>
<dbReference type="InterPro" id="IPR013644">
    <property type="entry name" value="DXP_reductoisomerase_C"/>
</dbReference>
<dbReference type="InterPro" id="IPR013512">
    <property type="entry name" value="DXP_reductoisomerase_N"/>
</dbReference>
<dbReference type="InterPro" id="IPR026877">
    <property type="entry name" value="DXPR_C"/>
</dbReference>
<dbReference type="InterPro" id="IPR036169">
    <property type="entry name" value="DXPR_C_sf"/>
</dbReference>
<dbReference type="InterPro" id="IPR036291">
    <property type="entry name" value="NAD(P)-bd_dom_sf"/>
</dbReference>
<dbReference type="NCBIfam" id="TIGR00243">
    <property type="entry name" value="Dxr"/>
    <property type="match status" value="1"/>
</dbReference>
<dbReference type="NCBIfam" id="NF009114">
    <property type="entry name" value="PRK12464.1"/>
    <property type="match status" value="1"/>
</dbReference>
<dbReference type="PANTHER" id="PTHR30525">
    <property type="entry name" value="1-DEOXY-D-XYLULOSE 5-PHOSPHATE REDUCTOISOMERASE"/>
    <property type="match status" value="1"/>
</dbReference>
<dbReference type="PANTHER" id="PTHR30525:SF0">
    <property type="entry name" value="1-DEOXY-D-XYLULOSE 5-PHOSPHATE REDUCTOISOMERASE, CHLOROPLASTIC"/>
    <property type="match status" value="1"/>
</dbReference>
<dbReference type="Pfam" id="PF08436">
    <property type="entry name" value="DXP_redisom_C"/>
    <property type="match status" value="1"/>
</dbReference>
<dbReference type="Pfam" id="PF02670">
    <property type="entry name" value="DXP_reductoisom"/>
    <property type="match status" value="1"/>
</dbReference>
<dbReference type="Pfam" id="PF13288">
    <property type="entry name" value="DXPR_C"/>
    <property type="match status" value="1"/>
</dbReference>
<dbReference type="PIRSF" id="PIRSF006205">
    <property type="entry name" value="Dxp_reductismrs"/>
    <property type="match status" value="1"/>
</dbReference>
<dbReference type="SUPFAM" id="SSF69055">
    <property type="entry name" value="1-deoxy-D-xylulose-5-phosphate reductoisomerase, C-terminal domain"/>
    <property type="match status" value="1"/>
</dbReference>
<dbReference type="SUPFAM" id="SSF55347">
    <property type="entry name" value="Glyceraldehyde-3-phosphate dehydrogenase-like, C-terminal domain"/>
    <property type="match status" value="1"/>
</dbReference>
<dbReference type="SUPFAM" id="SSF51735">
    <property type="entry name" value="NAD(P)-binding Rossmann-fold domains"/>
    <property type="match status" value="1"/>
</dbReference>
<accession>Q4USQ4</accession>
<keyword id="KW-0414">Isoprene biosynthesis</keyword>
<keyword id="KW-0464">Manganese</keyword>
<keyword id="KW-0479">Metal-binding</keyword>
<keyword id="KW-0521">NADP</keyword>
<keyword id="KW-0560">Oxidoreductase</keyword>
<protein>
    <recommendedName>
        <fullName evidence="1">1-deoxy-D-xylulose 5-phosphate reductoisomerase</fullName>
        <shortName evidence="1">DXP reductoisomerase</shortName>
        <ecNumber evidence="1">1.1.1.267</ecNumber>
    </recommendedName>
    <alternativeName>
        <fullName evidence="1">1-deoxyxylulose-5-phosphate reductoisomerase</fullName>
    </alternativeName>
    <alternativeName>
        <fullName evidence="1">2-C-methyl-D-erythritol 4-phosphate synthase</fullName>
    </alternativeName>
</protein>
<evidence type="ECO:0000255" key="1">
    <source>
        <dbReference type="HAMAP-Rule" id="MF_00183"/>
    </source>
</evidence>
<gene>
    <name evidence="1" type="primary">dxr</name>
    <name type="ordered locus">XC_2871</name>
</gene>
<proteinExistence type="inferred from homology"/>
<sequence>MSGSSLRRVAVFGATGSIGASALDVIARHPERLRASVLSAGSKVDALLALCVLHRPAHAVIADAALYPALRDGLRAAGLTTQAHAGDQALDALAASDACDTVVAAIVGAAGLSSTLAAAAAGKRLLLANKESLVLAGELLTRTAAAAGAEIIPIDSEHSAIFQCLRSCDASRGVRRVILTASGGPFRGRQRAQLAEVTPAQAVAHPKWSMGPKISVDSATLMNKGLEVIEAHHLFGLPGEQIDVLVHPQSLVHSLVEFVDGSTLAQLGLPDMRTTLAVGLAWPERVESGVGGLDLLQQGRLDFEAPDTEAFPCLRLAWDALRAGGTAPAILNAANEVAVSAFLQGKVGFLAIPALVEHTLTTLQRQNADTLNALLFADAEARRTTERALAHHSLHA</sequence>
<name>DXR_XANC8</name>
<comment type="function">
    <text evidence="1">Catalyzes the NADPH-dependent rearrangement and reduction of 1-deoxy-D-xylulose-5-phosphate (DXP) to 2-C-methyl-D-erythritol 4-phosphate (MEP).</text>
</comment>
<comment type="catalytic activity">
    <reaction evidence="1">
        <text>2-C-methyl-D-erythritol 4-phosphate + NADP(+) = 1-deoxy-D-xylulose 5-phosphate + NADPH + H(+)</text>
        <dbReference type="Rhea" id="RHEA:13717"/>
        <dbReference type="ChEBI" id="CHEBI:15378"/>
        <dbReference type="ChEBI" id="CHEBI:57783"/>
        <dbReference type="ChEBI" id="CHEBI:57792"/>
        <dbReference type="ChEBI" id="CHEBI:58262"/>
        <dbReference type="ChEBI" id="CHEBI:58349"/>
        <dbReference type="EC" id="1.1.1.267"/>
    </reaction>
    <physiologicalReaction direction="right-to-left" evidence="1">
        <dbReference type="Rhea" id="RHEA:13719"/>
    </physiologicalReaction>
</comment>
<comment type="cofactor">
    <cofactor evidence="1">
        <name>Mg(2+)</name>
        <dbReference type="ChEBI" id="CHEBI:18420"/>
    </cofactor>
    <cofactor evidence="1">
        <name>Mn(2+)</name>
        <dbReference type="ChEBI" id="CHEBI:29035"/>
    </cofactor>
</comment>
<comment type="pathway">
    <text evidence="1">Isoprenoid biosynthesis; isopentenyl diphosphate biosynthesis via DXP pathway; isopentenyl diphosphate from 1-deoxy-D-xylulose 5-phosphate: step 1/6.</text>
</comment>
<comment type="similarity">
    <text evidence="1">Belongs to the DXR family.</text>
</comment>
<feature type="chain" id="PRO_0000163741" description="1-deoxy-D-xylulose 5-phosphate reductoisomerase">
    <location>
        <begin position="1"/>
        <end position="396"/>
    </location>
</feature>
<feature type="binding site" evidence="1">
    <location>
        <position position="15"/>
    </location>
    <ligand>
        <name>NADPH</name>
        <dbReference type="ChEBI" id="CHEBI:57783"/>
    </ligand>
</feature>
<feature type="binding site" evidence="1">
    <location>
        <position position="16"/>
    </location>
    <ligand>
        <name>NADPH</name>
        <dbReference type="ChEBI" id="CHEBI:57783"/>
    </ligand>
</feature>
<feature type="binding site" evidence="1">
    <location>
        <position position="17"/>
    </location>
    <ligand>
        <name>NADPH</name>
        <dbReference type="ChEBI" id="CHEBI:57783"/>
    </ligand>
</feature>
<feature type="binding site" evidence="1">
    <location>
        <position position="18"/>
    </location>
    <ligand>
        <name>NADPH</name>
        <dbReference type="ChEBI" id="CHEBI:57783"/>
    </ligand>
</feature>
<feature type="binding site" evidence="1">
    <location>
        <position position="41"/>
    </location>
    <ligand>
        <name>NADPH</name>
        <dbReference type="ChEBI" id="CHEBI:57783"/>
    </ligand>
</feature>
<feature type="binding site" evidence="1">
    <location>
        <position position="129"/>
    </location>
    <ligand>
        <name>NADPH</name>
        <dbReference type="ChEBI" id="CHEBI:57783"/>
    </ligand>
</feature>
<feature type="binding site" evidence="1">
    <location>
        <position position="130"/>
    </location>
    <ligand>
        <name>1-deoxy-D-xylulose 5-phosphate</name>
        <dbReference type="ChEBI" id="CHEBI:57792"/>
    </ligand>
</feature>
<feature type="binding site" evidence="1">
    <location>
        <position position="131"/>
    </location>
    <ligand>
        <name>NADPH</name>
        <dbReference type="ChEBI" id="CHEBI:57783"/>
    </ligand>
</feature>
<feature type="binding site" evidence="1">
    <location>
        <position position="155"/>
    </location>
    <ligand>
        <name>Mn(2+)</name>
        <dbReference type="ChEBI" id="CHEBI:29035"/>
    </ligand>
</feature>
<feature type="binding site" evidence="1">
    <location>
        <position position="156"/>
    </location>
    <ligand>
        <name>1-deoxy-D-xylulose 5-phosphate</name>
        <dbReference type="ChEBI" id="CHEBI:57792"/>
    </ligand>
</feature>
<feature type="binding site" evidence="1">
    <location>
        <position position="157"/>
    </location>
    <ligand>
        <name>1-deoxy-D-xylulose 5-phosphate</name>
        <dbReference type="ChEBI" id="CHEBI:57792"/>
    </ligand>
</feature>
<feature type="binding site" evidence="1">
    <location>
        <position position="157"/>
    </location>
    <ligand>
        <name>Mn(2+)</name>
        <dbReference type="ChEBI" id="CHEBI:29035"/>
    </ligand>
</feature>
<feature type="binding site" evidence="1">
    <location>
        <position position="182"/>
    </location>
    <ligand>
        <name>1-deoxy-D-xylulose 5-phosphate</name>
        <dbReference type="ChEBI" id="CHEBI:57792"/>
    </ligand>
</feature>
<feature type="binding site" evidence="1">
    <location>
        <position position="205"/>
    </location>
    <ligand>
        <name>1-deoxy-D-xylulose 5-phosphate</name>
        <dbReference type="ChEBI" id="CHEBI:57792"/>
    </ligand>
</feature>
<feature type="binding site" evidence="1">
    <location>
        <position position="211"/>
    </location>
    <ligand>
        <name>NADPH</name>
        <dbReference type="ChEBI" id="CHEBI:57783"/>
    </ligand>
</feature>
<feature type="binding site" evidence="1">
    <location>
        <position position="218"/>
    </location>
    <ligand>
        <name>1-deoxy-D-xylulose 5-phosphate</name>
        <dbReference type="ChEBI" id="CHEBI:57792"/>
    </ligand>
</feature>
<feature type="binding site" evidence="1">
    <location>
        <position position="223"/>
    </location>
    <ligand>
        <name>1-deoxy-D-xylulose 5-phosphate</name>
        <dbReference type="ChEBI" id="CHEBI:57792"/>
    </ligand>
</feature>
<feature type="binding site" evidence="1">
    <location>
        <position position="224"/>
    </location>
    <ligand>
        <name>1-deoxy-D-xylulose 5-phosphate</name>
        <dbReference type="ChEBI" id="CHEBI:57792"/>
    </ligand>
</feature>
<feature type="binding site" evidence="1">
    <location>
        <position position="227"/>
    </location>
    <ligand>
        <name>1-deoxy-D-xylulose 5-phosphate</name>
        <dbReference type="ChEBI" id="CHEBI:57792"/>
    </ligand>
</feature>
<feature type="binding site" evidence="1">
    <location>
        <position position="227"/>
    </location>
    <ligand>
        <name>Mn(2+)</name>
        <dbReference type="ChEBI" id="CHEBI:29035"/>
    </ligand>
</feature>
<reference key="1">
    <citation type="journal article" date="2005" name="Genome Res.">
        <title>Comparative and functional genomic analyses of the pathogenicity of phytopathogen Xanthomonas campestris pv. campestris.</title>
        <authorList>
            <person name="Qian W."/>
            <person name="Jia Y."/>
            <person name="Ren S.-X."/>
            <person name="He Y.-Q."/>
            <person name="Feng J.-X."/>
            <person name="Lu L.-F."/>
            <person name="Sun Q."/>
            <person name="Ying G."/>
            <person name="Tang D.-J."/>
            <person name="Tang H."/>
            <person name="Wu W."/>
            <person name="Hao P."/>
            <person name="Wang L."/>
            <person name="Jiang B.-L."/>
            <person name="Zeng S."/>
            <person name="Gu W.-Y."/>
            <person name="Lu G."/>
            <person name="Rong L."/>
            <person name="Tian Y."/>
            <person name="Yao Z."/>
            <person name="Fu G."/>
            <person name="Chen B."/>
            <person name="Fang R."/>
            <person name="Qiang B."/>
            <person name="Chen Z."/>
            <person name="Zhao G.-P."/>
            <person name="Tang J.-L."/>
            <person name="He C."/>
        </authorList>
    </citation>
    <scope>NUCLEOTIDE SEQUENCE [LARGE SCALE GENOMIC DNA]</scope>
    <source>
        <strain>8004</strain>
    </source>
</reference>